<proteinExistence type="inferred from homology"/>
<feature type="chain" id="PRO_0000110294" description="NAD-dependent protein deacetylase">
    <location>
        <begin position="1"/>
        <end position="247"/>
    </location>
</feature>
<feature type="domain" description="Deacetylase sirtuin-type" evidence="2">
    <location>
        <begin position="1"/>
        <end position="247"/>
    </location>
</feature>
<feature type="active site" description="Proton acceptor" evidence="2">
    <location>
        <position position="118"/>
    </location>
</feature>
<feature type="binding site" evidence="1">
    <location>
        <position position="20"/>
    </location>
    <ligand>
        <name>NAD(+)</name>
        <dbReference type="ChEBI" id="CHEBI:57540"/>
    </ligand>
</feature>
<feature type="binding site" evidence="1">
    <location>
        <position position="24"/>
    </location>
    <ligand>
        <name>NAD(+)</name>
        <dbReference type="ChEBI" id="CHEBI:57540"/>
    </ligand>
</feature>
<feature type="binding site" evidence="1">
    <location>
        <position position="31"/>
    </location>
    <ligand>
        <name>NAD(+)</name>
        <dbReference type="ChEBI" id="CHEBI:57540"/>
    </ligand>
</feature>
<feature type="binding site" evidence="1">
    <location>
        <position position="31"/>
    </location>
    <ligand>
        <name>nicotinamide</name>
        <dbReference type="ChEBI" id="CHEBI:17154"/>
    </ligand>
</feature>
<feature type="binding site" evidence="1">
    <location>
        <position position="32"/>
    </location>
    <ligand>
        <name>NAD(+)</name>
        <dbReference type="ChEBI" id="CHEBI:57540"/>
    </ligand>
</feature>
<feature type="binding site" evidence="1">
    <location>
        <position position="100"/>
    </location>
    <ligand>
        <name>NAD(+)</name>
        <dbReference type="ChEBI" id="CHEBI:57540"/>
    </ligand>
</feature>
<feature type="binding site" evidence="1">
    <location>
        <position position="102"/>
    </location>
    <ligand>
        <name>NAD(+)</name>
        <dbReference type="ChEBI" id="CHEBI:57540"/>
    </ligand>
</feature>
<feature type="binding site" evidence="1">
    <location>
        <position position="102"/>
    </location>
    <ligand>
        <name>nicotinamide</name>
        <dbReference type="ChEBI" id="CHEBI:17154"/>
    </ligand>
</feature>
<feature type="binding site" evidence="1">
    <location>
        <position position="103"/>
    </location>
    <ligand>
        <name>NAD(+)</name>
        <dbReference type="ChEBI" id="CHEBI:57540"/>
    </ligand>
</feature>
<feature type="binding site" evidence="1">
    <location>
        <position position="103"/>
    </location>
    <ligand>
        <name>nicotinamide</name>
        <dbReference type="ChEBI" id="CHEBI:17154"/>
    </ligand>
</feature>
<feature type="binding site" evidence="1">
    <location>
        <position position="118"/>
    </location>
    <ligand>
        <name>NAD(+)</name>
        <dbReference type="ChEBI" id="CHEBI:57540"/>
    </ligand>
</feature>
<feature type="binding site" evidence="1">
    <location>
        <position position="126"/>
    </location>
    <ligand>
        <name>Zn(2+)</name>
        <dbReference type="ChEBI" id="CHEBI:29105"/>
    </ligand>
</feature>
<feature type="binding site" evidence="1">
    <location>
        <position position="129"/>
    </location>
    <ligand>
        <name>Zn(2+)</name>
        <dbReference type="ChEBI" id="CHEBI:29105"/>
    </ligand>
</feature>
<feature type="binding site" evidence="1">
    <location>
        <position position="146"/>
    </location>
    <ligand>
        <name>Zn(2+)</name>
        <dbReference type="ChEBI" id="CHEBI:29105"/>
    </ligand>
</feature>
<feature type="binding site" evidence="1">
    <location>
        <position position="156"/>
    </location>
    <ligand>
        <name>Zn(2+)</name>
        <dbReference type="ChEBI" id="CHEBI:29105"/>
    </ligand>
</feature>
<feature type="binding site" evidence="1">
    <location>
        <position position="192"/>
    </location>
    <ligand>
        <name>NAD(+)</name>
        <dbReference type="ChEBI" id="CHEBI:57540"/>
    </ligand>
</feature>
<feature type="binding site" evidence="1">
    <location>
        <position position="193"/>
    </location>
    <ligand>
        <name>NAD(+)</name>
        <dbReference type="ChEBI" id="CHEBI:57540"/>
    </ligand>
</feature>
<feature type="binding site" evidence="1">
    <location>
        <position position="218"/>
    </location>
    <ligand>
        <name>NAD(+)</name>
        <dbReference type="ChEBI" id="CHEBI:57540"/>
    </ligand>
</feature>
<feature type="binding site" evidence="1">
    <location>
        <position position="236"/>
    </location>
    <ligand>
        <name>NAD(+)</name>
        <dbReference type="ChEBI" id="CHEBI:57540"/>
    </ligand>
</feature>
<name>NPD_BACSU</name>
<keyword id="KW-0963">Cytoplasm</keyword>
<keyword id="KW-0479">Metal-binding</keyword>
<keyword id="KW-0520">NAD</keyword>
<keyword id="KW-1185">Reference proteome</keyword>
<keyword id="KW-0808">Transferase</keyword>
<keyword id="KW-0862">Zinc</keyword>
<dbReference type="EC" id="2.3.1.286" evidence="1 2"/>
<dbReference type="EMBL" id="Y14082">
    <property type="protein sequence ID" value="CAA74510.1"/>
    <property type="molecule type" value="Genomic_DNA"/>
</dbReference>
<dbReference type="EMBL" id="AL009126">
    <property type="protein sequence ID" value="CAB12804.1"/>
    <property type="molecule type" value="Genomic_DNA"/>
</dbReference>
<dbReference type="PIR" id="H69827">
    <property type="entry name" value="H69827"/>
</dbReference>
<dbReference type="SMR" id="O07595"/>
<dbReference type="FunCoup" id="O07595">
    <property type="interactions" value="555"/>
</dbReference>
<dbReference type="STRING" id="224308.BSU09650"/>
<dbReference type="PaxDb" id="224308-BSU09650"/>
<dbReference type="EnsemblBacteria" id="CAB12804">
    <property type="protein sequence ID" value="CAB12804"/>
    <property type="gene ID" value="BSU_09650"/>
</dbReference>
<dbReference type="GeneID" id="936271"/>
<dbReference type="KEGG" id="bsu:BSU09650"/>
<dbReference type="PATRIC" id="fig|224308.179.peg.1038"/>
<dbReference type="eggNOG" id="COG0846">
    <property type="taxonomic scope" value="Bacteria"/>
</dbReference>
<dbReference type="InParanoid" id="O07595"/>
<dbReference type="OrthoDB" id="9800582at2"/>
<dbReference type="PhylomeDB" id="O07595"/>
<dbReference type="BioCyc" id="BSUB:BSU09650-MONOMER"/>
<dbReference type="Proteomes" id="UP000001570">
    <property type="component" value="Chromosome"/>
</dbReference>
<dbReference type="GO" id="GO:0005737">
    <property type="term" value="C:cytoplasm"/>
    <property type="evidence" value="ECO:0007669"/>
    <property type="project" value="UniProtKB-SubCell"/>
</dbReference>
<dbReference type="GO" id="GO:0017136">
    <property type="term" value="F:histone deacetylase activity, NAD-dependent"/>
    <property type="evidence" value="ECO:0000318"/>
    <property type="project" value="GO_Central"/>
</dbReference>
<dbReference type="GO" id="GO:0070403">
    <property type="term" value="F:NAD+ binding"/>
    <property type="evidence" value="ECO:0000318"/>
    <property type="project" value="GO_Central"/>
</dbReference>
<dbReference type="GO" id="GO:0008270">
    <property type="term" value="F:zinc ion binding"/>
    <property type="evidence" value="ECO:0007669"/>
    <property type="project" value="UniProtKB-UniRule"/>
</dbReference>
<dbReference type="CDD" id="cd01407">
    <property type="entry name" value="SIR2-fam"/>
    <property type="match status" value="1"/>
</dbReference>
<dbReference type="Gene3D" id="3.30.1600.10">
    <property type="entry name" value="SIR2/SIRT2 'Small Domain"/>
    <property type="match status" value="1"/>
</dbReference>
<dbReference type="Gene3D" id="3.40.50.1220">
    <property type="entry name" value="TPP-binding domain"/>
    <property type="match status" value="1"/>
</dbReference>
<dbReference type="HAMAP" id="MF_01968">
    <property type="entry name" value="Sirtuin_ClassU"/>
    <property type="match status" value="1"/>
</dbReference>
<dbReference type="InterPro" id="IPR029035">
    <property type="entry name" value="DHS-like_NAD/FAD-binding_dom"/>
</dbReference>
<dbReference type="InterPro" id="IPR050134">
    <property type="entry name" value="NAD-dep_sirtuin_deacylases"/>
</dbReference>
<dbReference type="InterPro" id="IPR003000">
    <property type="entry name" value="Sirtuin"/>
</dbReference>
<dbReference type="InterPro" id="IPR026591">
    <property type="entry name" value="Sirtuin_cat_small_dom_sf"/>
</dbReference>
<dbReference type="InterPro" id="IPR028628">
    <property type="entry name" value="Sirtuin_class_U"/>
</dbReference>
<dbReference type="InterPro" id="IPR026590">
    <property type="entry name" value="Ssirtuin_cat_dom"/>
</dbReference>
<dbReference type="NCBIfam" id="NF001754">
    <property type="entry name" value="PRK00481.1-4"/>
    <property type="match status" value="1"/>
</dbReference>
<dbReference type="PANTHER" id="PTHR11085:SF4">
    <property type="entry name" value="NAD-DEPENDENT PROTEIN DEACYLASE"/>
    <property type="match status" value="1"/>
</dbReference>
<dbReference type="PANTHER" id="PTHR11085">
    <property type="entry name" value="NAD-DEPENDENT PROTEIN DEACYLASE SIRTUIN-5, MITOCHONDRIAL-RELATED"/>
    <property type="match status" value="1"/>
</dbReference>
<dbReference type="Pfam" id="PF02146">
    <property type="entry name" value="SIR2"/>
    <property type="match status" value="1"/>
</dbReference>
<dbReference type="SUPFAM" id="SSF52467">
    <property type="entry name" value="DHS-like NAD/FAD-binding domain"/>
    <property type="match status" value="1"/>
</dbReference>
<dbReference type="PROSITE" id="PS50305">
    <property type="entry name" value="SIRTUIN"/>
    <property type="match status" value="1"/>
</dbReference>
<protein>
    <recommendedName>
        <fullName evidence="1">NAD-dependent protein deacetylase</fullName>
        <ecNumber evidence="1 2">2.3.1.286</ecNumber>
    </recommendedName>
    <alternativeName>
        <fullName evidence="1">Regulatory protein SIR2 homolog</fullName>
    </alternativeName>
</protein>
<sequence length="247" mass="27418">METFKSILHEAQRIVVLTGAGMSTESGIPDFRSAGGIWTEDASRMEAMSLDYFLSYPRLFWPKFKELFQMKMSGSFEPNEGHLLLAELEKQGKQVDIFTQNIDGLHKKAGSRHVYELHGSIQTAACPACGARYDLPHLLEREVPECTAAGNNGDICGTVLKTDVVLFGDAVMHFDTLYEKLDQADLLLVIGTSLEVAPARFVPEDASLIPGMKKVIINLEPTYCDSLFDMVIHQKIGEFARSLGMKK</sequence>
<gene>
    <name evidence="1" type="primary">cobB</name>
    <name type="synonym">yhdZ</name>
    <name type="ordered locus">BSU09650</name>
</gene>
<reference key="1">
    <citation type="journal article" date="1998" name="Microbiology">
        <title>The 172 kb prkA-addAB region from 83 degrees to 97 degrees of the Bacillus subtilis chromosome contains several dysfunctional genes, the glyB marker, many genes encoding transporter proteins, and the ubiquitous hit gene.</title>
        <authorList>
            <person name="Noback M.A."/>
            <person name="Holsappel S."/>
            <person name="Kiewiet R."/>
            <person name="Terpstra P."/>
            <person name="Wambutt R."/>
            <person name="Wedler H."/>
            <person name="Venema G."/>
            <person name="Bron S."/>
        </authorList>
    </citation>
    <scope>NUCLEOTIDE SEQUENCE [GENOMIC DNA]</scope>
    <source>
        <strain>168</strain>
    </source>
</reference>
<reference key="2">
    <citation type="journal article" date="1997" name="Nature">
        <title>The complete genome sequence of the Gram-positive bacterium Bacillus subtilis.</title>
        <authorList>
            <person name="Kunst F."/>
            <person name="Ogasawara N."/>
            <person name="Moszer I."/>
            <person name="Albertini A.M."/>
            <person name="Alloni G."/>
            <person name="Azevedo V."/>
            <person name="Bertero M.G."/>
            <person name="Bessieres P."/>
            <person name="Bolotin A."/>
            <person name="Borchert S."/>
            <person name="Borriss R."/>
            <person name="Boursier L."/>
            <person name="Brans A."/>
            <person name="Braun M."/>
            <person name="Brignell S.C."/>
            <person name="Bron S."/>
            <person name="Brouillet S."/>
            <person name="Bruschi C.V."/>
            <person name="Caldwell B."/>
            <person name="Capuano V."/>
            <person name="Carter N.M."/>
            <person name="Choi S.-K."/>
            <person name="Codani J.-J."/>
            <person name="Connerton I.F."/>
            <person name="Cummings N.J."/>
            <person name="Daniel R.A."/>
            <person name="Denizot F."/>
            <person name="Devine K.M."/>
            <person name="Duesterhoeft A."/>
            <person name="Ehrlich S.D."/>
            <person name="Emmerson P.T."/>
            <person name="Entian K.-D."/>
            <person name="Errington J."/>
            <person name="Fabret C."/>
            <person name="Ferrari E."/>
            <person name="Foulger D."/>
            <person name="Fritz C."/>
            <person name="Fujita M."/>
            <person name="Fujita Y."/>
            <person name="Fuma S."/>
            <person name="Galizzi A."/>
            <person name="Galleron N."/>
            <person name="Ghim S.-Y."/>
            <person name="Glaser P."/>
            <person name="Goffeau A."/>
            <person name="Golightly E.J."/>
            <person name="Grandi G."/>
            <person name="Guiseppi G."/>
            <person name="Guy B.J."/>
            <person name="Haga K."/>
            <person name="Haiech J."/>
            <person name="Harwood C.R."/>
            <person name="Henaut A."/>
            <person name="Hilbert H."/>
            <person name="Holsappel S."/>
            <person name="Hosono S."/>
            <person name="Hullo M.-F."/>
            <person name="Itaya M."/>
            <person name="Jones L.-M."/>
            <person name="Joris B."/>
            <person name="Karamata D."/>
            <person name="Kasahara Y."/>
            <person name="Klaerr-Blanchard M."/>
            <person name="Klein C."/>
            <person name="Kobayashi Y."/>
            <person name="Koetter P."/>
            <person name="Koningstein G."/>
            <person name="Krogh S."/>
            <person name="Kumano M."/>
            <person name="Kurita K."/>
            <person name="Lapidus A."/>
            <person name="Lardinois S."/>
            <person name="Lauber J."/>
            <person name="Lazarevic V."/>
            <person name="Lee S.-M."/>
            <person name="Levine A."/>
            <person name="Liu H."/>
            <person name="Masuda S."/>
            <person name="Mauel C."/>
            <person name="Medigue C."/>
            <person name="Medina N."/>
            <person name="Mellado R.P."/>
            <person name="Mizuno M."/>
            <person name="Moestl D."/>
            <person name="Nakai S."/>
            <person name="Noback M."/>
            <person name="Noone D."/>
            <person name="O'Reilly M."/>
            <person name="Ogawa K."/>
            <person name="Ogiwara A."/>
            <person name="Oudega B."/>
            <person name="Park S.-H."/>
            <person name="Parro V."/>
            <person name="Pohl T.M."/>
            <person name="Portetelle D."/>
            <person name="Porwollik S."/>
            <person name="Prescott A.M."/>
            <person name="Presecan E."/>
            <person name="Pujic P."/>
            <person name="Purnelle B."/>
            <person name="Rapoport G."/>
            <person name="Rey M."/>
            <person name="Reynolds S."/>
            <person name="Rieger M."/>
            <person name="Rivolta C."/>
            <person name="Rocha E."/>
            <person name="Roche B."/>
            <person name="Rose M."/>
            <person name="Sadaie Y."/>
            <person name="Sato T."/>
            <person name="Scanlan E."/>
            <person name="Schleich S."/>
            <person name="Schroeter R."/>
            <person name="Scoffone F."/>
            <person name="Sekiguchi J."/>
            <person name="Sekowska A."/>
            <person name="Seror S.J."/>
            <person name="Serror P."/>
            <person name="Shin B.-S."/>
            <person name="Soldo B."/>
            <person name="Sorokin A."/>
            <person name="Tacconi E."/>
            <person name="Takagi T."/>
            <person name="Takahashi H."/>
            <person name="Takemaru K."/>
            <person name="Takeuchi M."/>
            <person name="Tamakoshi A."/>
            <person name="Tanaka T."/>
            <person name="Terpstra P."/>
            <person name="Tognoni A."/>
            <person name="Tosato V."/>
            <person name="Uchiyama S."/>
            <person name="Vandenbol M."/>
            <person name="Vannier F."/>
            <person name="Vassarotti A."/>
            <person name="Viari A."/>
            <person name="Wambutt R."/>
            <person name="Wedler E."/>
            <person name="Wedler H."/>
            <person name="Weitzenegger T."/>
            <person name="Winters P."/>
            <person name="Wipat A."/>
            <person name="Yamamoto H."/>
            <person name="Yamane K."/>
            <person name="Yasumoto K."/>
            <person name="Yata K."/>
            <person name="Yoshida K."/>
            <person name="Yoshikawa H.-F."/>
            <person name="Zumstein E."/>
            <person name="Yoshikawa H."/>
            <person name="Danchin A."/>
        </authorList>
    </citation>
    <scope>NUCLEOTIDE SEQUENCE [LARGE SCALE GENOMIC DNA]</scope>
    <source>
        <strain>168</strain>
    </source>
</reference>
<evidence type="ECO:0000255" key="1">
    <source>
        <dbReference type="HAMAP-Rule" id="MF_01968"/>
    </source>
</evidence>
<evidence type="ECO:0000255" key="2">
    <source>
        <dbReference type="PROSITE-ProRule" id="PRU00236"/>
    </source>
</evidence>
<comment type="function">
    <text evidence="1">NAD-dependent protein deacetylase which modulates the activities of several enzymes which are inactive in their acetylated form.</text>
</comment>
<comment type="catalytic activity">
    <reaction evidence="1">
        <text>N(6)-acetyl-L-lysyl-[protein] + NAD(+) + H2O = 2''-O-acetyl-ADP-D-ribose + nicotinamide + L-lysyl-[protein]</text>
        <dbReference type="Rhea" id="RHEA:43636"/>
        <dbReference type="Rhea" id="RHEA-COMP:9752"/>
        <dbReference type="Rhea" id="RHEA-COMP:10731"/>
        <dbReference type="ChEBI" id="CHEBI:15377"/>
        <dbReference type="ChEBI" id="CHEBI:17154"/>
        <dbReference type="ChEBI" id="CHEBI:29969"/>
        <dbReference type="ChEBI" id="CHEBI:57540"/>
        <dbReference type="ChEBI" id="CHEBI:61930"/>
        <dbReference type="ChEBI" id="CHEBI:83767"/>
        <dbReference type="EC" id="2.3.1.286"/>
    </reaction>
</comment>
<comment type="cofactor">
    <cofactor evidence="1">
        <name>Zn(2+)</name>
        <dbReference type="ChEBI" id="CHEBI:29105"/>
    </cofactor>
    <text evidence="1">Binds 1 zinc ion per subunit.</text>
</comment>
<comment type="subcellular location">
    <subcellularLocation>
        <location evidence="1">Cytoplasm</location>
    </subcellularLocation>
</comment>
<comment type="similarity">
    <text evidence="1">Belongs to the sirtuin family. Class U subfamily.</text>
</comment>
<organism>
    <name type="scientific">Bacillus subtilis (strain 168)</name>
    <dbReference type="NCBI Taxonomy" id="224308"/>
    <lineage>
        <taxon>Bacteria</taxon>
        <taxon>Bacillati</taxon>
        <taxon>Bacillota</taxon>
        <taxon>Bacilli</taxon>
        <taxon>Bacillales</taxon>
        <taxon>Bacillaceae</taxon>
        <taxon>Bacillus</taxon>
    </lineage>
</organism>
<accession>O07595</accession>